<keyword id="KW-0963">Cytoplasm</keyword>
<keyword id="KW-0255">Endonuclease</keyword>
<keyword id="KW-0378">Hydrolase</keyword>
<keyword id="KW-0460">Magnesium</keyword>
<keyword id="KW-0479">Metal-binding</keyword>
<keyword id="KW-0540">Nuclease</keyword>
<sequence length="155" mass="17597">MLKQVEIFTDGSCLGNPGPGGYGAILRYRGREKTFSAGYTRTTNNRMELMAAIVALEALKEHCEVILSTDSQYVRQGITQWIHNWKKRGWKTADKKPVKNVDLWQRLDAALGQHQIKWEWVKGHAGHPENERCDELARAAAMNPTLEDTGYQVEV</sequence>
<proteinExistence type="inferred from homology"/>
<dbReference type="EC" id="3.1.26.4" evidence="1"/>
<dbReference type="EMBL" id="CU928163">
    <property type="protein sequence ID" value="CAR11426.1"/>
    <property type="molecule type" value="Genomic_DNA"/>
</dbReference>
<dbReference type="RefSeq" id="WP_000917883.1">
    <property type="nucleotide sequence ID" value="NC_011751.1"/>
</dbReference>
<dbReference type="RefSeq" id="YP_002410982.1">
    <property type="nucleotide sequence ID" value="NC_011751.1"/>
</dbReference>
<dbReference type="SMR" id="B7N876"/>
<dbReference type="STRING" id="585056.ECUMN_0211"/>
<dbReference type="GeneID" id="93777209"/>
<dbReference type="KEGG" id="eum:ECUMN_0211"/>
<dbReference type="PATRIC" id="fig|585056.7.peg.400"/>
<dbReference type="HOGENOM" id="CLU_030894_6_0_6"/>
<dbReference type="Proteomes" id="UP000007097">
    <property type="component" value="Chromosome"/>
</dbReference>
<dbReference type="GO" id="GO:0005737">
    <property type="term" value="C:cytoplasm"/>
    <property type="evidence" value="ECO:0007669"/>
    <property type="project" value="UniProtKB-SubCell"/>
</dbReference>
<dbReference type="GO" id="GO:0000287">
    <property type="term" value="F:magnesium ion binding"/>
    <property type="evidence" value="ECO:0007669"/>
    <property type="project" value="UniProtKB-UniRule"/>
</dbReference>
<dbReference type="GO" id="GO:0003676">
    <property type="term" value="F:nucleic acid binding"/>
    <property type="evidence" value="ECO:0007669"/>
    <property type="project" value="InterPro"/>
</dbReference>
<dbReference type="GO" id="GO:0004523">
    <property type="term" value="F:RNA-DNA hybrid ribonuclease activity"/>
    <property type="evidence" value="ECO:0007669"/>
    <property type="project" value="UniProtKB-UniRule"/>
</dbReference>
<dbReference type="GO" id="GO:0043137">
    <property type="term" value="P:DNA replication, removal of RNA primer"/>
    <property type="evidence" value="ECO:0007669"/>
    <property type="project" value="TreeGrafter"/>
</dbReference>
<dbReference type="CDD" id="cd09278">
    <property type="entry name" value="RNase_HI_prokaryote_like"/>
    <property type="match status" value="1"/>
</dbReference>
<dbReference type="FunFam" id="3.30.420.10:FF:000008">
    <property type="entry name" value="Ribonuclease H"/>
    <property type="match status" value="1"/>
</dbReference>
<dbReference type="Gene3D" id="3.30.420.10">
    <property type="entry name" value="Ribonuclease H-like superfamily/Ribonuclease H"/>
    <property type="match status" value="1"/>
</dbReference>
<dbReference type="HAMAP" id="MF_00042">
    <property type="entry name" value="RNase_H"/>
    <property type="match status" value="1"/>
</dbReference>
<dbReference type="InterPro" id="IPR050092">
    <property type="entry name" value="RNase_H"/>
</dbReference>
<dbReference type="InterPro" id="IPR012337">
    <property type="entry name" value="RNaseH-like_sf"/>
</dbReference>
<dbReference type="InterPro" id="IPR002156">
    <property type="entry name" value="RNaseH_domain"/>
</dbReference>
<dbReference type="InterPro" id="IPR036397">
    <property type="entry name" value="RNaseH_sf"/>
</dbReference>
<dbReference type="InterPro" id="IPR022892">
    <property type="entry name" value="RNaseHI"/>
</dbReference>
<dbReference type="NCBIfam" id="NF001236">
    <property type="entry name" value="PRK00203.1"/>
    <property type="match status" value="1"/>
</dbReference>
<dbReference type="PANTHER" id="PTHR10642">
    <property type="entry name" value="RIBONUCLEASE H1"/>
    <property type="match status" value="1"/>
</dbReference>
<dbReference type="PANTHER" id="PTHR10642:SF26">
    <property type="entry name" value="RIBONUCLEASE H1"/>
    <property type="match status" value="1"/>
</dbReference>
<dbReference type="Pfam" id="PF00075">
    <property type="entry name" value="RNase_H"/>
    <property type="match status" value="1"/>
</dbReference>
<dbReference type="SUPFAM" id="SSF53098">
    <property type="entry name" value="Ribonuclease H-like"/>
    <property type="match status" value="1"/>
</dbReference>
<dbReference type="PROSITE" id="PS50879">
    <property type="entry name" value="RNASE_H_1"/>
    <property type="match status" value="1"/>
</dbReference>
<organism>
    <name type="scientific">Escherichia coli O17:K52:H18 (strain UMN026 / ExPEC)</name>
    <dbReference type="NCBI Taxonomy" id="585056"/>
    <lineage>
        <taxon>Bacteria</taxon>
        <taxon>Pseudomonadati</taxon>
        <taxon>Pseudomonadota</taxon>
        <taxon>Gammaproteobacteria</taxon>
        <taxon>Enterobacterales</taxon>
        <taxon>Enterobacteriaceae</taxon>
        <taxon>Escherichia</taxon>
    </lineage>
</organism>
<feature type="chain" id="PRO_1000116580" description="Ribonuclease H">
    <location>
        <begin position="1"/>
        <end position="155"/>
    </location>
</feature>
<feature type="domain" description="RNase H type-1" evidence="2">
    <location>
        <begin position="1"/>
        <end position="142"/>
    </location>
</feature>
<feature type="binding site" evidence="1">
    <location>
        <position position="10"/>
    </location>
    <ligand>
        <name>Mg(2+)</name>
        <dbReference type="ChEBI" id="CHEBI:18420"/>
        <label>1</label>
    </ligand>
</feature>
<feature type="binding site" evidence="1">
    <location>
        <position position="10"/>
    </location>
    <ligand>
        <name>Mg(2+)</name>
        <dbReference type="ChEBI" id="CHEBI:18420"/>
        <label>2</label>
    </ligand>
</feature>
<feature type="binding site" evidence="1">
    <location>
        <position position="48"/>
    </location>
    <ligand>
        <name>Mg(2+)</name>
        <dbReference type="ChEBI" id="CHEBI:18420"/>
        <label>1</label>
    </ligand>
</feature>
<feature type="binding site" evidence="1">
    <location>
        <position position="70"/>
    </location>
    <ligand>
        <name>Mg(2+)</name>
        <dbReference type="ChEBI" id="CHEBI:18420"/>
        <label>1</label>
    </ligand>
</feature>
<feature type="binding site" evidence="1">
    <location>
        <position position="134"/>
    </location>
    <ligand>
        <name>Mg(2+)</name>
        <dbReference type="ChEBI" id="CHEBI:18420"/>
        <label>2</label>
    </ligand>
</feature>
<name>RNH_ECOLU</name>
<reference key="1">
    <citation type="journal article" date="2009" name="PLoS Genet.">
        <title>Organised genome dynamics in the Escherichia coli species results in highly diverse adaptive paths.</title>
        <authorList>
            <person name="Touchon M."/>
            <person name="Hoede C."/>
            <person name="Tenaillon O."/>
            <person name="Barbe V."/>
            <person name="Baeriswyl S."/>
            <person name="Bidet P."/>
            <person name="Bingen E."/>
            <person name="Bonacorsi S."/>
            <person name="Bouchier C."/>
            <person name="Bouvet O."/>
            <person name="Calteau A."/>
            <person name="Chiapello H."/>
            <person name="Clermont O."/>
            <person name="Cruveiller S."/>
            <person name="Danchin A."/>
            <person name="Diard M."/>
            <person name="Dossat C."/>
            <person name="Karoui M.E."/>
            <person name="Frapy E."/>
            <person name="Garry L."/>
            <person name="Ghigo J.M."/>
            <person name="Gilles A.M."/>
            <person name="Johnson J."/>
            <person name="Le Bouguenec C."/>
            <person name="Lescat M."/>
            <person name="Mangenot S."/>
            <person name="Martinez-Jehanne V."/>
            <person name="Matic I."/>
            <person name="Nassif X."/>
            <person name="Oztas S."/>
            <person name="Petit M.A."/>
            <person name="Pichon C."/>
            <person name="Rouy Z."/>
            <person name="Ruf C.S."/>
            <person name="Schneider D."/>
            <person name="Tourret J."/>
            <person name="Vacherie B."/>
            <person name="Vallenet D."/>
            <person name="Medigue C."/>
            <person name="Rocha E.P.C."/>
            <person name="Denamur E."/>
        </authorList>
    </citation>
    <scope>NUCLEOTIDE SEQUENCE [LARGE SCALE GENOMIC DNA]</scope>
    <source>
        <strain>UMN026 / ExPEC</strain>
    </source>
</reference>
<protein>
    <recommendedName>
        <fullName evidence="1">Ribonuclease H</fullName>
        <shortName evidence="1">RNase H</shortName>
        <ecNumber evidence="1">3.1.26.4</ecNumber>
    </recommendedName>
</protein>
<comment type="function">
    <text evidence="1">Endonuclease that specifically degrades the RNA of RNA-DNA hybrids.</text>
</comment>
<comment type="catalytic activity">
    <reaction evidence="1">
        <text>Endonucleolytic cleavage to 5'-phosphomonoester.</text>
        <dbReference type="EC" id="3.1.26.4"/>
    </reaction>
</comment>
<comment type="cofactor">
    <cofactor evidence="1">
        <name>Mg(2+)</name>
        <dbReference type="ChEBI" id="CHEBI:18420"/>
    </cofactor>
    <text evidence="1">Binds 1 Mg(2+) ion per subunit. May bind a second metal ion at a regulatory site, or after substrate binding.</text>
</comment>
<comment type="subunit">
    <text evidence="1">Monomer.</text>
</comment>
<comment type="subcellular location">
    <subcellularLocation>
        <location evidence="1">Cytoplasm</location>
    </subcellularLocation>
</comment>
<comment type="similarity">
    <text evidence="1">Belongs to the RNase H family.</text>
</comment>
<accession>B7N876</accession>
<gene>
    <name evidence="1" type="primary">rnhA</name>
    <name type="ordered locus">ECUMN_0211</name>
</gene>
<evidence type="ECO:0000255" key="1">
    <source>
        <dbReference type="HAMAP-Rule" id="MF_00042"/>
    </source>
</evidence>
<evidence type="ECO:0000255" key="2">
    <source>
        <dbReference type="PROSITE-ProRule" id="PRU00408"/>
    </source>
</evidence>